<reference key="1">
    <citation type="journal article" date="2005" name="J. Bacteriol.">
        <title>Whole-genome sequencing of Staphylococcus haemolyticus uncovers the extreme plasticity of its genome and the evolution of human-colonizing staphylococcal species.</title>
        <authorList>
            <person name="Takeuchi F."/>
            <person name="Watanabe S."/>
            <person name="Baba T."/>
            <person name="Yuzawa H."/>
            <person name="Ito T."/>
            <person name="Morimoto Y."/>
            <person name="Kuroda M."/>
            <person name="Cui L."/>
            <person name="Takahashi M."/>
            <person name="Ankai A."/>
            <person name="Baba S."/>
            <person name="Fukui S."/>
            <person name="Lee J.C."/>
            <person name="Hiramatsu K."/>
        </authorList>
    </citation>
    <scope>NUCLEOTIDE SEQUENCE [LARGE SCALE GENOMIC DNA]</scope>
    <source>
        <strain>JCSC1435</strain>
    </source>
</reference>
<comment type="function">
    <text evidence="1">Catalyzes the specific phosphorylation of the 3-hydroxyl group of shikimic acid using ATP as a cosubstrate.</text>
</comment>
<comment type="catalytic activity">
    <reaction evidence="1">
        <text>shikimate + ATP = 3-phosphoshikimate + ADP + H(+)</text>
        <dbReference type="Rhea" id="RHEA:13121"/>
        <dbReference type="ChEBI" id="CHEBI:15378"/>
        <dbReference type="ChEBI" id="CHEBI:30616"/>
        <dbReference type="ChEBI" id="CHEBI:36208"/>
        <dbReference type="ChEBI" id="CHEBI:145989"/>
        <dbReference type="ChEBI" id="CHEBI:456216"/>
        <dbReference type="EC" id="2.7.1.71"/>
    </reaction>
</comment>
<comment type="cofactor">
    <cofactor evidence="1">
        <name>Mg(2+)</name>
        <dbReference type="ChEBI" id="CHEBI:18420"/>
    </cofactor>
    <text evidence="1">Binds 1 Mg(2+) ion per subunit.</text>
</comment>
<comment type="pathway">
    <text evidence="1">Metabolic intermediate biosynthesis; chorismate biosynthesis; chorismate from D-erythrose 4-phosphate and phosphoenolpyruvate: step 5/7.</text>
</comment>
<comment type="subunit">
    <text evidence="1">Monomer.</text>
</comment>
<comment type="subcellular location">
    <subcellularLocation>
        <location evidence="1">Cytoplasm</location>
    </subcellularLocation>
</comment>
<comment type="similarity">
    <text evidence="1">Belongs to the shikimate kinase family.</text>
</comment>
<accession>Q4L6N8</accession>
<keyword id="KW-0028">Amino-acid biosynthesis</keyword>
<keyword id="KW-0057">Aromatic amino acid biosynthesis</keyword>
<keyword id="KW-0067">ATP-binding</keyword>
<keyword id="KW-0963">Cytoplasm</keyword>
<keyword id="KW-0418">Kinase</keyword>
<keyword id="KW-0460">Magnesium</keyword>
<keyword id="KW-0479">Metal-binding</keyword>
<keyword id="KW-0547">Nucleotide-binding</keyword>
<keyword id="KW-0808">Transferase</keyword>
<sequence length="172" mass="20144">MLLNKKNSPIILIGFMGTGKSTIGEYLSLEKQLSFIDLDVYIEIKENKTIPEIFEEVGEIGFRKIEYNYLTECTKKYDVIATGGGVIEYTESLNYLKQYKYIFWLDCDIDVIFKRVTNDKHRPNAIDKSKKQLNNLYLSRISRYNEIAFMKVNSDKTIREIYNEIINYLTCG</sequence>
<gene>
    <name evidence="1" type="primary">aroK</name>
    <name type="ordered locus">SH1378</name>
</gene>
<evidence type="ECO:0000255" key="1">
    <source>
        <dbReference type="HAMAP-Rule" id="MF_00109"/>
    </source>
</evidence>
<name>AROK_STAHJ</name>
<feature type="chain" id="PRO_0000192418" description="Shikimate kinase">
    <location>
        <begin position="1"/>
        <end position="172"/>
    </location>
</feature>
<feature type="binding site" evidence="1">
    <location>
        <begin position="17"/>
        <end position="22"/>
    </location>
    <ligand>
        <name>ATP</name>
        <dbReference type="ChEBI" id="CHEBI:30616"/>
    </ligand>
</feature>
<feature type="binding site" evidence="1">
    <location>
        <position position="21"/>
    </location>
    <ligand>
        <name>Mg(2+)</name>
        <dbReference type="ChEBI" id="CHEBI:18420"/>
    </ligand>
</feature>
<feature type="binding site" evidence="1">
    <location>
        <position position="39"/>
    </location>
    <ligand>
        <name>substrate</name>
    </ligand>
</feature>
<feature type="binding site" evidence="1">
    <location>
        <position position="63"/>
    </location>
    <ligand>
        <name>substrate</name>
    </ligand>
</feature>
<feature type="binding site" evidence="1">
    <location>
        <position position="84"/>
    </location>
    <ligand>
        <name>substrate</name>
    </ligand>
</feature>
<feature type="binding site" evidence="1">
    <location>
        <position position="122"/>
    </location>
    <ligand>
        <name>ATP</name>
        <dbReference type="ChEBI" id="CHEBI:30616"/>
    </ligand>
</feature>
<feature type="binding site" evidence="1">
    <location>
        <position position="140"/>
    </location>
    <ligand>
        <name>substrate</name>
    </ligand>
</feature>
<proteinExistence type="inferred from homology"/>
<dbReference type="EC" id="2.7.1.71" evidence="1"/>
<dbReference type="EMBL" id="AP006716">
    <property type="protein sequence ID" value="BAE04687.1"/>
    <property type="molecule type" value="Genomic_DNA"/>
</dbReference>
<dbReference type="RefSeq" id="WP_011275674.1">
    <property type="nucleotide sequence ID" value="NC_007168.1"/>
</dbReference>
<dbReference type="SMR" id="Q4L6N8"/>
<dbReference type="KEGG" id="sha:SH1378"/>
<dbReference type="eggNOG" id="COG0703">
    <property type="taxonomic scope" value="Bacteria"/>
</dbReference>
<dbReference type="HOGENOM" id="CLU_057607_4_3_9"/>
<dbReference type="OrthoDB" id="9800332at2"/>
<dbReference type="UniPathway" id="UPA00053">
    <property type="reaction ID" value="UER00088"/>
</dbReference>
<dbReference type="Proteomes" id="UP000000543">
    <property type="component" value="Chromosome"/>
</dbReference>
<dbReference type="GO" id="GO:0005829">
    <property type="term" value="C:cytosol"/>
    <property type="evidence" value="ECO:0007669"/>
    <property type="project" value="TreeGrafter"/>
</dbReference>
<dbReference type="GO" id="GO:0005524">
    <property type="term" value="F:ATP binding"/>
    <property type="evidence" value="ECO:0007669"/>
    <property type="project" value="UniProtKB-UniRule"/>
</dbReference>
<dbReference type="GO" id="GO:0000287">
    <property type="term" value="F:magnesium ion binding"/>
    <property type="evidence" value="ECO:0007669"/>
    <property type="project" value="UniProtKB-UniRule"/>
</dbReference>
<dbReference type="GO" id="GO:0004765">
    <property type="term" value="F:shikimate kinase activity"/>
    <property type="evidence" value="ECO:0007669"/>
    <property type="project" value="UniProtKB-UniRule"/>
</dbReference>
<dbReference type="GO" id="GO:0008652">
    <property type="term" value="P:amino acid biosynthetic process"/>
    <property type="evidence" value="ECO:0007669"/>
    <property type="project" value="UniProtKB-KW"/>
</dbReference>
<dbReference type="GO" id="GO:0009073">
    <property type="term" value="P:aromatic amino acid family biosynthetic process"/>
    <property type="evidence" value="ECO:0007669"/>
    <property type="project" value="UniProtKB-KW"/>
</dbReference>
<dbReference type="GO" id="GO:0009423">
    <property type="term" value="P:chorismate biosynthetic process"/>
    <property type="evidence" value="ECO:0007669"/>
    <property type="project" value="UniProtKB-UniRule"/>
</dbReference>
<dbReference type="CDD" id="cd00464">
    <property type="entry name" value="SK"/>
    <property type="match status" value="1"/>
</dbReference>
<dbReference type="Gene3D" id="3.40.50.300">
    <property type="entry name" value="P-loop containing nucleotide triphosphate hydrolases"/>
    <property type="match status" value="1"/>
</dbReference>
<dbReference type="HAMAP" id="MF_00109">
    <property type="entry name" value="Shikimate_kinase"/>
    <property type="match status" value="1"/>
</dbReference>
<dbReference type="InterPro" id="IPR027417">
    <property type="entry name" value="P-loop_NTPase"/>
</dbReference>
<dbReference type="InterPro" id="IPR031322">
    <property type="entry name" value="Shikimate/glucono_kinase"/>
</dbReference>
<dbReference type="InterPro" id="IPR000623">
    <property type="entry name" value="Shikimate_kinase/TSH1"/>
</dbReference>
<dbReference type="InterPro" id="IPR023000">
    <property type="entry name" value="Shikimate_kinase_CS"/>
</dbReference>
<dbReference type="PANTHER" id="PTHR21087">
    <property type="entry name" value="SHIKIMATE KINASE"/>
    <property type="match status" value="1"/>
</dbReference>
<dbReference type="PANTHER" id="PTHR21087:SF16">
    <property type="entry name" value="SHIKIMATE KINASE 1, CHLOROPLASTIC"/>
    <property type="match status" value="1"/>
</dbReference>
<dbReference type="Pfam" id="PF01202">
    <property type="entry name" value="SKI"/>
    <property type="match status" value="1"/>
</dbReference>
<dbReference type="PRINTS" id="PR01100">
    <property type="entry name" value="SHIKIMTKNASE"/>
</dbReference>
<dbReference type="SUPFAM" id="SSF52540">
    <property type="entry name" value="P-loop containing nucleoside triphosphate hydrolases"/>
    <property type="match status" value="1"/>
</dbReference>
<dbReference type="PROSITE" id="PS01128">
    <property type="entry name" value="SHIKIMATE_KINASE"/>
    <property type="match status" value="1"/>
</dbReference>
<protein>
    <recommendedName>
        <fullName evidence="1">Shikimate kinase</fullName>
        <shortName evidence="1">SK</shortName>
        <ecNumber evidence="1">2.7.1.71</ecNumber>
    </recommendedName>
</protein>
<organism>
    <name type="scientific">Staphylococcus haemolyticus (strain JCSC1435)</name>
    <dbReference type="NCBI Taxonomy" id="279808"/>
    <lineage>
        <taxon>Bacteria</taxon>
        <taxon>Bacillati</taxon>
        <taxon>Bacillota</taxon>
        <taxon>Bacilli</taxon>
        <taxon>Bacillales</taxon>
        <taxon>Staphylococcaceae</taxon>
        <taxon>Staphylococcus</taxon>
    </lineage>
</organism>